<comment type="miscellaneous">
    <text>Unlike their eukaryotic orthologs the putative Burkholderia deoxyribonuclease-2 are probably not secreted from the cell, as they do not have a signal sequence.</text>
</comment>
<comment type="similarity">
    <text evidence="1">Belongs to the DNase II family.</text>
</comment>
<name>DNS2_BURPS</name>
<gene>
    <name type="ordered locus">BPSS1983</name>
</gene>
<keyword id="KW-0255">Endonuclease</keyword>
<keyword id="KW-0378">Hydrolase</keyword>
<keyword id="KW-0540">Nuclease</keyword>
<keyword id="KW-1185">Reference proteome</keyword>
<proteinExistence type="inferred from homology"/>
<protein>
    <recommendedName>
        <fullName>Putative deoxyribonuclease-2</fullName>
        <ecNumber>3.1.-.-</ecNumber>
    </recommendedName>
    <alternativeName>
        <fullName>Deoxyribonuclease II</fullName>
    </alternativeName>
</protein>
<feature type="chain" id="PRO_0000230669" description="Putative deoxyribonuclease-2">
    <location>
        <begin position="1"/>
        <end position="350"/>
    </location>
</feature>
<accession>Q63IT3</accession>
<reference key="1">
    <citation type="journal article" date="2004" name="Proc. Natl. Acad. Sci. U.S.A.">
        <title>Genomic plasticity of the causative agent of melioidosis, Burkholderia pseudomallei.</title>
        <authorList>
            <person name="Holden M.T.G."/>
            <person name="Titball R.W."/>
            <person name="Peacock S.J."/>
            <person name="Cerdeno-Tarraga A.-M."/>
            <person name="Atkins T."/>
            <person name="Crossman L.C."/>
            <person name="Pitt T."/>
            <person name="Churcher C."/>
            <person name="Mungall K.L."/>
            <person name="Bentley S.D."/>
            <person name="Sebaihia M."/>
            <person name="Thomson N.R."/>
            <person name="Bason N."/>
            <person name="Beacham I.R."/>
            <person name="Brooks K."/>
            <person name="Brown K.A."/>
            <person name="Brown N.F."/>
            <person name="Challis G.L."/>
            <person name="Cherevach I."/>
            <person name="Chillingworth T."/>
            <person name="Cronin A."/>
            <person name="Crossett B."/>
            <person name="Davis P."/>
            <person name="DeShazer D."/>
            <person name="Feltwell T."/>
            <person name="Fraser A."/>
            <person name="Hance Z."/>
            <person name="Hauser H."/>
            <person name="Holroyd S."/>
            <person name="Jagels K."/>
            <person name="Keith K.E."/>
            <person name="Maddison M."/>
            <person name="Moule S."/>
            <person name="Price C."/>
            <person name="Quail M.A."/>
            <person name="Rabbinowitsch E."/>
            <person name="Rutherford K."/>
            <person name="Sanders M."/>
            <person name="Simmonds M."/>
            <person name="Songsivilai S."/>
            <person name="Stevens K."/>
            <person name="Tumapa S."/>
            <person name="Vesaratchavest M."/>
            <person name="Whitehead S."/>
            <person name="Yeats C."/>
            <person name="Barrell B.G."/>
            <person name="Oyston P.C.F."/>
            <person name="Parkhill J."/>
        </authorList>
    </citation>
    <scope>NUCLEOTIDE SEQUENCE [LARGE SCALE GENOMIC DNA]</scope>
    <source>
        <strain>K96243</strain>
    </source>
</reference>
<reference key="2">
    <citation type="journal article" date="2003" name="Gene">
        <title>A family history of deoxyribonuclease II: surprises from Trichinella spiralis and Burkholderia pseudomallei.</title>
        <authorList>
            <person name="MacLea K.S."/>
            <person name="Krieser R.J."/>
            <person name="Eastman A."/>
        </authorList>
    </citation>
    <scope>DISCUSSION OF SEQUENCE</scope>
</reference>
<sequence>MTISPRDEQNRSVDLWFAYKVPKLTKDTDSDSATGYEYVYYDREIGSVQKSPNRMNNPKGALFYTLDSIFGDPGSTTGWILYNDEMPADADRSNNATLGHTKGVIAFDIASNSALWLLHSWPKYTSPSAPGVPTPLYGQTFLCVSLDLETAGKIAAQMALHQQPQVYLPRTAGLDHASPLYTLTQPLNASAPGDSDSLDFKTRGGAPFKVIAKNRKWGKDFWNDLVGPTLKADMDVETWIRGKIPPILDSDGVHKTYDIKFIDLRKLGAPWAWPETQDHAKWGITTTDDWVCVGDINRMVTQEKRGGGTIAFQDPQLWKALSQTDLIVPPPGKTEAQARAMIHRTHQPAD</sequence>
<evidence type="ECO:0000305" key="1"/>
<dbReference type="EC" id="3.1.-.-"/>
<dbReference type="EMBL" id="BX571966">
    <property type="protein sequence ID" value="CAH39461.1"/>
    <property type="molecule type" value="Genomic_DNA"/>
</dbReference>
<dbReference type="RefSeq" id="WP_004524950.1">
    <property type="nucleotide sequence ID" value="NZ_CP009537.1"/>
</dbReference>
<dbReference type="RefSeq" id="YP_111989.1">
    <property type="nucleotide sequence ID" value="NC_006351.1"/>
</dbReference>
<dbReference type="SMR" id="Q63IT3"/>
<dbReference type="STRING" id="272560.BPSS1983"/>
<dbReference type="KEGG" id="bps:BPSS1983"/>
<dbReference type="PATRIC" id="fig|272560.51.peg.5488"/>
<dbReference type="Proteomes" id="UP000000605">
    <property type="component" value="Chromosome 2"/>
</dbReference>
<dbReference type="GO" id="GO:0004531">
    <property type="term" value="F:deoxyribonuclease II activity"/>
    <property type="evidence" value="ECO:0007669"/>
    <property type="project" value="InterPro"/>
</dbReference>
<dbReference type="CDD" id="cd09120">
    <property type="entry name" value="PLDc_DNaseII_1"/>
    <property type="match status" value="1"/>
</dbReference>
<dbReference type="CDD" id="cd09121">
    <property type="entry name" value="PLDc_DNaseII_2"/>
    <property type="match status" value="1"/>
</dbReference>
<dbReference type="InterPro" id="IPR004947">
    <property type="entry name" value="DNase_II"/>
</dbReference>
<dbReference type="PANTHER" id="PTHR10858">
    <property type="entry name" value="DEOXYRIBONUCLEASE II"/>
    <property type="match status" value="1"/>
</dbReference>
<dbReference type="PANTHER" id="PTHR10858:SF23">
    <property type="entry name" value="DEOXYRIBONUCLEASE II"/>
    <property type="match status" value="1"/>
</dbReference>
<dbReference type="Pfam" id="PF03265">
    <property type="entry name" value="DNase_II"/>
    <property type="match status" value="1"/>
</dbReference>
<organism>
    <name type="scientific">Burkholderia pseudomallei (strain K96243)</name>
    <dbReference type="NCBI Taxonomy" id="272560"/>
    <lineage>
        <taxon>Bacteria</taxon>
        <taxon>Pseudomonadati</taxon>
        <taxon>Pseudomonadota</taxon>
        <taxon>Betaproteobacteria</taxon>
        <taxon>Burkholderiales</taxon>
        <taxon>Burkholderiaceae</taxon>
        <taxon>Burkholderia</taxon>
        <taxon>pseudomallei group</taxon>
    </lineage>
</organism>